<protein>
    <recommendedName>
        <fullName>Cytochrome b</fullName>
    </recommendedName>
    <alternativeName>
        <fullName>Complex III subunit 3</fullName>
    </alternativeName>
    <alternativeName>
        <fullName>Complex III subunit III</fullName>
    </alternativeName>
    <alternativeName>
        <fullName>Cytochrome b-c1 complex subunit 3</fullName>
    </alternativeName>
    <alternativeName>
        <fullName>Ubiquinol-cytochrome-c reductase complex cytochrome b subunit</fullName>
    </alternativeName>
</protein>
<gene>
    <name type="primary">MT-CYB</name>
    <name type="synonym">COB</name>
    <name type="synonym">CYTB</name>
    <name type="synonym">MTCYB</name>
</gene>
<keyword id="KW-0249">Electron transport</keyword>
<keyword id="KW-0349">Heme</keyword>
<keyword id="KW-0408">Iron</keyword>
<keyword id="KW-0472">Membrane</keyword>
<keyword id="KW-0479">Metal-binding</keyword>
<keyword id="KW-0496">Mitochondrion</keyword>
<keyword id="KW-0999">Mitochondrion inner membrane</keyword>
<keyword id="KW-0679">Respiratory chain</keyword>
<keyword id="KW-0812">Transmembrane</keyword>
<keyword id="KW-1133">Transmembrane helix</keyword>
<keyword id="KW-0813">Transport</keyword>
<keyword id="KW-0830">Ubiquinone</keyword>
<reference key="1">
    <citation type="journal article" date="2004" name="J. Mammal.">
        <title>Molecular systematics of the fishing bat Myotis (Pizonyx) vivesi.</title>
        <authorList>
            <person name="Stadelmann B.Y."/>
            <person name="Herrera L.G."/>
            <person name="Arroyo-Cabrales J."/>
            <person name="Flores-Martinez J.J."/>
            <person name="May B.P."/>
            <person name="Ruedi M."/>
        </authorList>
    </citation>
    <scope>NUCLEOTIDE SEQUENCE [GENOMIC DNA]</scope>
    <source>
        <tissue>Liver</tissue>
    </source>
</reference>
<reference key="2">
    <citation type="journal article" date="2004" name="Acta Chiropt.">
        <title>Phylogeny of African myotis bats (Chiroptera, Vespertilionidae) inferred from cytochrome b sequences.</title>
        <authorList>
            <person name="Stadelmann B."/>
            <person name="Jacobs D.S."/>
            <person name="Schoeman C."/>
            <person name="Ruedi M."/>
        </authorList>
    </citation>
    <scope>NUCLEOTIDE SEQUENCE [GENOMIC DNA]</scope>
    <source>
        <strain>Isolate TM 40300</strain>
        <tissue>Wing</tissue>
    </source>
</reference>
<accession>Q7YBY4</accession>
<comment type="function">
    <text evidence="2">Component of the ubiquinol-cytochrome c reductase complex (complex III or cytochrome b-c1 complex) that is part of the mitochondrial respiratory chain. The b-c1 complex mediates electron transfer from ubiquinol to cytochrome c. Contributes to the generation of a proton gradient across the mitochondrial membrane that is then used for ATP synthesis.</text>
</comment>
<comment type="cofactor">
    <cofactor evidence="2">
        <name>heme b</name>
        <dbReference type="ChEBI" id="CHEBI:60344"/>
    </cofactor>
    <text evidence="2">Binds 2 heme b groups non-covalently.</text>
</comment>
<comment type="subunit">
    <text evidence="2">The cytochrome bc1 complex contains 11 subunits: 3 respiratory subunits (MT-CYB, CYC1 and UQCRFS1), 2 core proteins (UQCRC1 and UQCRC2) and 6 low-molecular weight proteins (UQCRH/QCR6, UQCRB/QCR7, UQCRQ/QCR8, UQCR10/QCR9, UQCR11/QCR10 and a cleavage product of UQCRFS1). This cytochrome bc1 complex then forms a dimer.</text>
</comment>
<comment type="subcellular location">
    <subcellularLocation>
        <location evidence="2">Mitochondrion inner membrane</location>
        <topology evidence="2">Multi-pass membrane protein</topology>
    </subcellularLocation>
</comment>
<comment type="miscellaneous">
    <text evidence="1">Heme 1 (or BL or b562) is low-potential and absorbs at about 562 nm, and heme 2 (or BH or b566) is high-potential and absorbs at about 566 nm.</text>
</comment>
<comment type="similarity">
    <text evidence="3 4">Belongs to the cytochrome b family.</text>
</comment>
<comment type="caution">
    <text evidence="2">The full-length protein contains only eight transmembrane helices, not nine as predicted by bioinformatics tools.</text>
</comment>
<dbReference type="EMBL" id="AJ504409">
    <property type="protein sequence ID" value="CAD43189.1"/>
    <property type="molecule type" value="Genomic_DNA"/>
</dbReference>
<dbReference type="EMBL" id="AJ841952">
    <property type="protein sequence ID" value="CAH56545.1"/>
    <property type="molecule type" value="Genomic_DNA"/>
</dbReference>
<dbReference type="SMR" id="Q7YBY4"/>
<dbReference type="GO" id="GO:0005743">
    <property type="term" value="C:mitochondrial inner membrane"/>
    <property type="evidence" value="ECO:0007669"/>
    <property type="project" value="UniProtKB-SubCell"/>
</dbReference>
<dbReference type="GO" id="GO:0045275">
    <property type="term" value="C:respiratory chain complex III"/>
    <property type="evidence" value="ECO:0007669"/>
    <property type="project" value="InterPro"/>
</dbReference>
<dbReference type="GO" id="GO:0046872">
    <property type="term" value="F:metal ion binding"/>
    <property type="evidence" value="ECO:0007669"/>
    <property type="project" value="UniProtKB-KW"/>
</dbReference>
<dbReference type="GO" id="GO:0008121">
    <property type="term" value="F:ubiquinol-cytochrome-c reductase activity"/>
    <property type="evidence" value="ECO:0007669"/>
    <property type="project" value="InterPro"/>
</dbReference>
<dbReference type="GO" id="GO:0006122">
    <property type="term" value="P:mitochondrial electron transport, ubiquinol to cytochrome c"/>
    <property type="evidence" value="ECO:0007669"/>
    <property type="project" value="TreeGrafter"/>
</dbReference>
<dbReference type="CDD" id="cd00290">
    <property type="entry name" value="cytochrome_b_C"/>
    <property type="match status" value="1"/>
</dbReference>
<dbReference type="CDD" id="cd00284">
    <property type="entry name" value="Cytochrome_b_N"/>
    <property type="match status" value="1"/>
</dbReference>
<dbReference type="FunFam" id="1.20.810.10:FF:000002">
    <property type="entry name" value="Cytochrome b"/>
    <property type="match status" value="1"/>
</dbReference>
<dbReference type="Gene3D" id="1.20.810.10">
    <property type="entry name" value="Cytochrome Bc1 Complex, Chain C"/>
    <property type="match status" value="1"/>
</dbReference>
<dbReference type="InterPro" id="IPR005798">
    <property type="entry name" value="Cyt_b/b6_C"/>
</dbReference>
<dbReference type="InterPro" id="IPR036150">
    <property type="entry name" value="Cyt_b/b6_C_sf"/>
</dbReference>
<dbReference type="InterPro" id="IPR005797">
    <property type="entry name" value="Cyt_b/b6_N"/>
</dbReference>
<dbReference type="InterPro" id="IPR027387">
    <property type="entry name" value="Cytb/b6-like_sf"/>
</dbReference>
<dbReference type="InterPro" id="IPR030689">
    <property type="entry name" value="Cytochrome_b"/>
</dbReference>
<dbReference type="InterPro" id="IPR048260">
    <property type="entry name" value="Cytochrome_b_C_euk/bac"/>
</dbReference>
<dbReference type="InterPro" id="IPR048259">
    <property type="entry name" value="Cytochrome_b_N_euk/bac"/>
</dbReference>
<dbReference type="InterPro" id="IPR016174">
    <property type="entry name" value="Di-haem_cyt_TM"/>
</dbReference>
<dbReference type="PANTHER" id="PTHR19271">
    <property type="entry name" value="CYTOCHROME B"/>
    <property type="match status" value="1"/>
</dbReference>
<dbReference type="PANTHER" id="PTHR19271:SF16">
    <property type="entry name" value="CYTOCHROME B"/>
    <property type="match status" value="1"/>
</dbReference>
<dbReference type="Pfam" id="PF00032">
    <property type="entry name" value="Cytochrom_B_C"/>
    <property type="match status" value="1"/>
</dbReference>
<dbReference type="Pfam" id="PF00033">
    <property type="entry name" value="Cytochrome_B"/>
    <property type="match status" value="1"/>
</dbReference>
<dbReference type="PIRSF" id="PIRSF038885">
    <property type="entry name" value="COB"/>
    <property type="match status" value="1"/>
</dbReference>
<dbReference type="SUPFAM" id="SSF81648">
    <property type="entry name" value="a domain/subunit of cytochrome bc1 complex (Ubiquinol-cytochrome c reductase)"/>
    <property type="match status" value="1"/>
</dbReference>
<dbReference type="SUPFAM" id="SSF81342">
    <property type="entry name" value="Transmembrane di-heme cytochromes"/>
    <property type="match status" value="1"/>
</dbReference>
<dbReference type="PROSITE" id="PS51003">
    <property type="entry name" value="CYTB_CTER"/>
    <property type="match status" value="1"/>
</dbReference>
<dbReference type="PROSITE" id="PS51002">
    <property type="entry name" value="CYTB_NTER"/>
    <property type="match status" value="1"/>
</dbReference>
<feature type="chain" id="PRO_0000254734" description="Cytochrome b">
    <location>
        <begin position="1"/>
        <end position="379"/>
    </location>
</feature>
<feature type="transmembrane region" description="Helical" evidence="2">
    <location>
        <begin position="33"/>
        <end position="53"/>
    </location>
</feature>
<feature type="transmembrane region" description="Helical" evidence="2">
    <location>
        <begin position="77"/>
        <end position="98"/>
    </location>
</feature>
<feature type="transmembrane region" description="Helical" evidence="2">
    <location>
        <begin position="113"/>
        <end position="133"/>
    </location>
</feature>
<feature type="transmembrane region" description="Helical" evidence="2">
    <location>
        <begin position="178"/>
        <end position="198"/>
    </location>
</feature>
<feature type="transmembrane region" description="Helical" evidence="2">
    <location>
        <begin position="226"/>
        <end position="246"/>
    </location>
</feature>
<feature type="transmembrane region" description="Helical" evidence="2">
    <location>
        <begin position="288"/>
        <end position="308"/>
    </location>
</feature>
<feature type="transmembrane region" description="Helical" evidence="2">
    <location>
        <begin position="320"/>
        <end position="340"/>
    </location>
</feature>
<feature type="transmembrane region" description="Helical" evidence="2">
    <location>
        <begin position="347"/>
        <end position="367"/>
    </location>
</feature>
<feature type="binding site" description="axial binding residue" evidence="2">
    <location>
        <position position="83"/>
    </location>
    <ligand>
        <name>heme b</name>
        <dbReference type="ChEBI" id="CHEBI:60344"/>
        <label>b562</label>
    </ligand>
    <ligandPart>
        <name>Fe</name>
        <dbReference type="ChEBI" id="CHEBI:18248"/>
    </ligandPart>
</feature>
<feature type="binding site" description="axial binding residue" evidence="2">
    <location>
        <position position="97"/>
    </location>
    <ligand>
        <name>heme b</name>
        <dbReference type="ChEBI" id="CHEBI:60344"/>
        <label>b566</label>
    </ligand>
    <ligandPart>
        <name>Fe</name>
        <dbReference type="ChEBI" id="CHEBI:18248"/>
    </ligandPart>
</feature>
<feature type="binding site" description="axial binding residue" evidence="2">
    <location>
        <position position="182"/>
    </location>
    <ligand>
        <name>heme b</name>
        <dbReference type="ChEBI" id="CHEBI:60344"/>
        <label>b562</label>
    </ligand>
    <ligandPart>
        <name>Fe</name>
        <dbReference type="ChEBI" id="CHEBI:18248"/>
    </ligandPart>
</feature>
<feature type="binding site" description="axial binding residue" evidence="2">
    <location>
        <position position="196"/>
    </location>
    <ligand>
        <name>heme b</name>
        <dbReference type="ChEBI" id="CHEBI:60344"/>
        <label>b566</label>
    </ligand>
    <ligandPart>
        <name>Fe</name>
        <dbReference type="ChEBI" id="CHEBI:18248"/>
    </ligandPart>
</feature>
<feature type="binding site" evidence="2">
    <location>
        <position position="201"/>
    </location>
    <ligand>
        <name>a ubiquinone</name>
        <dbReference type="ChEBI" id="CHEBI:16389"/>
    </ligand>
</feature>
<organism>
    <name type="scientific">Myotis tricolor</name>
    <name type="common">Cape hairy bat</name>
    <name type="synonym">Vespertilio tricolor</name>
    <dbReference type="NCBI Taxonomy" id="233765"/>
    <lineage>
        <taxon>Eukaryota</taxon>
        <taxon>Metazoa</taxon>
        <taxon>Chordata</taxon>
        <taxon>Craniata</taxon>
        <taxon>Vertebrata</taxon>
        <taxon>Euteleostomi</taxon>
        <taxon>Mammalia</taxon>
        <taxon>Eutheria</taxon>
        <taxon>Laurasiatheria</taxon>
        <taxon>Chiroptera</taxon>
        <taxon>Yangochiroptera</taxon>
        <taxon>Vespertilionidae</taxon>
        <taxon>Myotis</taxon>
    </lineage>
</organism>
<name>CYB_MYOTR</name>
<proteinExistence type="inferred from homology"/>
<evidence type="ECO:0000250" key="1"/>
<evidence type="ECO:0000250" key="2">
    <source>
        <dbReference type="UniProtKB" id="P00157"/>
    </source>
</evidence>
<evidence type="ECO:0000255" key="3">
    <source>
        <dbReference type="PROSITE-ProRule" id="PRU00967"/>
    </source>
</evidence>
<evidence type="ECO:0000255" key="4">
    <source>
        <dbReference type="PROSITE-ProRule" id="PRU00968"/>
    </source>
</evidence>
<sequence length="379" mass="42732">MTNIRKSHPLLKIVNSSFIDLPAPSNISSWWNFGSLLGICLALQILTGLFLAMHYTSDTATAFNSVTHICRDVNYGWILRYLHANGASMFFICLYLHVGRGLYYGSYMYTETWNVGVLLLFAVMATAFMGYVLPWGQMSFWGATVITNLLSAIPYIGTSLVEWIWGGFSVDKATLTRFFAFHFLLPFIISAMVMVHLLFLHETGSNNPTGIPSNMDMIPFHPYYTIKDILGLLLMITVLLMLVLFSPDMLGDPDNYTPANPLNTPPHIKPEWYFLFAYAILRSIPNKLGGVVALVLSILILVIIPFLHTSKQRSMTFRPLSQCLFWLLVADLLTLTWIGGQPVEHPYIIIGQLASILNFSIIIILMPLTSLVENHLLKW</sequence>
<geneLocation type="mitochondrion"/>